<name>CCME1_PSEPF</name>
<protein>
    <recommendedName>
        <fullName evidence="1">Cytochrome c-type biogenesis protein CcmE 1</fullName>
    </recommendedName>
    <alternativeName>
        <fullName evidence="1">Cytochrome c maturation protein E 1</fullName>
    </alternativeName>
    <alternativeName>
        <fullName evidence="1">Heme chaperone CcmE 1</fullName>
    </alternativeName>
</protein>
<keyword id="KW-0997">Cell inner membrane</keyword>
<keyword id="KW-1003">Cell membrane</keyword>
<keyword id="KW-0201">Cytochrome c-type biogenesis</keyword>
<keyword id="KW-0349">Heme</keyword>
<keyword id="KW-0408">Iron</keyword>
<keyword id="KW-0472">Membrane</keyword>
<keyword id="KW-0479">Metal-binding</keyword>
<keyword id="KW-0735">Signal-anchor</keyword>
<keyword id="KW-0812">Transmembrane</keyword>
<keyword id="KW-1133">Transmembrane helix</keyword>
<reference key="1">
    <citation type="journal article" date="2009" name="Genome Biol.">
        <title>Genomic and genetic analyses of diversity and plant interactions of Pseudomonas fluorescens.</title>
        <authorList>
            <person name="Silby M.W."/>
            <person name="Cerdeno-Tarraga A.M."/>
            <person name="Vernikos G.S."/>
            <person name="Giddens S.R."/>
            <person name="Jackson R.W."/>
            <person name="Preston G.M."/>
            <person name="Zhang X.-X."/>
            <person name="Moon C.D."/>
            <person name="Gehrig S.M."/>
            <person name="Godfrey S.A.C."/>
            <person name="Knight C.G."/>
            <person name="Malone J.G."/>
            <person name="Robinson Z."/>
            <person name="Spiers A.J."/>
            <person name="Harris S."/>
            <person name="Challis G.L."/>
            <person name="Yaxley A.M."/>
            <person name="Harris D."/>
            <person name="Seeger K."/>
            <person name="Murphy L."/>
            <person name="Rutter S."/>
            <person name="Squares R."/>
            <person name="Quail M.A."/>
            <person name="Saunders E."/>
            <person name="Mavromatis K."/>
            <person name="Brettin T.S."/>
            <person name="Bentley S.D."/>
            <person name="Hothersall J."/>
            <person name="Stephens E."/>
            <person name="Thomas C.M."/>
            <person name="Parkhill J."/>
            <person name="Levy S.B."/>
            <person name="Rainey P.B."/>
            <person name="Thomson N.R."/>
        </authorList>
    </citation>
    <scope>NUCLEOTIDE SEQUENCE [LARGE SCALE GENOMIC DNA]</scope>
    <source>
        <strain>Pf0-1</strain>
    </source>
</reference>
<comment type="function">
    <text evidence="1">Heme chaperone required for the biogenesis of c-type cytochromes. Transiently binds heme delivered by CcmC and transfers the heme to apo-cytochromes in a process facilitated by CcmF and CcmH.</text>
</comment>
<comment type="subcellular location">
    <subcellularLocation>
        <location evidence="1">Cell inner membrane</location>
        <topology evidence="1">Single-pass type II membrane protein</topology>
        <orientation evidence="1">Periplasmic side</orientation>
    </subcellularLocation>
</comment>
<comment type="similarity">
    <text evidence="1">Belongs to the CcmE/CycJ family.</text>
</comment>
<gene>
    <name evidence="1" type="primary">ccmE1</name>
    <name evidence="1" type="synonym">cycJ1</name>
    <name type="ordered locus">Pfl01_1581</name>
</gene>
<evidence type="ECO:0000255" key="1">
    <source>
        <dbReference type="HAMAP-Rule" id="MF_01959"/>
    </source>
</evidence>
<evidence type="ECO:0000256" key="2">
    <source>
        <dbReference type="SAM" id="MobiDB-lite"/>
    </source>
</evidence>
<accession>Q3KFY2</accession>
<organism>
    <name type="scientific">Pseudomonas fluorescens (strain Pf0-1)</name>
    <dbReference type="NCBI Taxonomy" id="205922"/>
    <lineage>
        <taxon>Bacteria</taxon>
        <taxon>Pseudomonadati</taxon>
        <taxon>Pseudomonadota</taxon>
        <taxon>Gammaproteobacteria</taxon>
        <taxon>Pseudomonadales</taxon>
        <taxon>Pseudomonadaceae</taxon>
        <taxon>Pseudomonas</taxon>
    </lineage>
</organism>
<feature type="chain" id="PRO_0000238837" description="Cytochrome c-type biogenesis protein CcmE 1">
    <location>
        <begin position="1"/>
        <end position="151"/>
    </location>
</feature>
<feature type="topological domain" description="Cytoplasmic" evidence="1">
    <location>
        <begin position="1"/>
        <end position="8"/>
    </location>
</feature>
<feature type="transmembrane region" description="Helical; Signal-anchor for type II membrane protein" evidence="1">
    <location>
        <begin position="9"/>
        <end position="29"/>
    </location>
</feature>
<feature type="topological domain" description="Periplasmic" evidence="1">
    <location>
        <begin position="30"/>
        <end position="151"/>
    </location>
</feature>
<feature type="region of interest" description="Disordered" evidence="2">
    <location>
        <begin position="131"/>
        <end position="151"/>
    </location>
</feature>
<feature type="binding site" description="covalent" evidence="1">
    <location>
        <position position="124"/>
    </location>
    <ligand>
        <name>heme</name>
        <dbReference type="ChEBI" id="CHEBI:30413"/>
    </ligand>
</feature>
<feature type="binding site" description="axial binding residue" evidence="1">
    <location>
        <position position="128"/>
    </location>
    <ligand>
        <name>heme</name>
        <dbReference type="ChEBI" id="CHEBI:30413"/>
    </ligand>
    <ligandPart>
        <name>Fe</name>
        <dbReference type="ChEBI" id="CHEBI:18248"/>
    </ligandPart>
</feature>
<proteinExistence type="inferred from homology"/>
<sequence>MNPLRKKRLIIILAILVGVGAAVGLALSALQQNINLFYTPTQIANGEAPQDTRIRAGGMVEKGSLQRSTDSLDVKFVVTDFNKSVTITYRGILPDLFREGQGIVALGKLNADGVVVADEVLAKHDEKYMPPEVTKALKDSGQSAPTPAKEG</sequence>
<dbReference type="EMBL" id="CP000094">
    <property type="protein sequence ID" value="ABA73324.1"/>
    <property type="molecule type" value="Genomic_DNA"/>
</dbReference>
<dbReference type="SMR" id="Q3KFY2"/>
<dbReference type="KEGG" id="pfo:Pfl01_1581"/>
<dbReference type="eggNOG" id="COG2332">
    <property type="taxonomic scope" value="Bacteria"/>
</dbReference>
<dbReference type="HOGENOM" id="CLU_079503_1_1_6"/>
<dbReference type="Proteomes" id="UP000002704">
    <property type="component" value="Chromosome"/>
</dbReference>
<dbReference type="GO" id="GO:0005886">
    <property type="term" value="C:plasma membrane"/>
    <property type="evidence" value="ECO:0007669"/>
    <property type="project" value="UniProtKB-SubCell"/>
</dbReference>
<dbReference type="GO" id="GO:0020037">
    <property type="term" value="F:heme binding"/>
    <property type="evidence" value="ECO:0007669"/>
    <property type="project" value="InterPro"/>
</dbReference>
<dbReference type="GO" id="GO:0046872">
    <property type="term" value="F:metal ion binding"/>
    <property type="evidence" value="ECO:0007669"/>
    <property type="project" value="UniProtKB-KW"/>
</dbReference>
<dbReference type="GO" id="GO:0017004">
    <property type="term" value="P:cytochrome complex assembly"/>
    <property type="evidence" value="ECO:0007669"/>
    <property type="project" value="UniProtKB-KW"/>
</dbReference>
<dbReference type="FunFam" id="2.40.50.140:FF:000104">
    <property type="entry name" value="Cytochrome c-type biogenesis protein CcmE"/>
    <property type="match status" value="1"/>
</dbReference>
<dbReference type="Gene3D" id="2.40.50.140">
    <property type="entry name" value="Nucleic acid-binding proteins"/>
    <property type="match status" value="1"/>
</dbReference>
<dbReference type="HAMAP" id="MF_01959">
    <property type="entry name" value="CcmE"/>
    <property type="match status" value="1"/>
</dbReference>
<dbReference type="InterPro" id="IPR004329">
    <property type="entry name" value="CcmE"/>
</dbReference>
<dbReference type="InterPro" id="IPR036127">
    <property type="entry name" value="CcmE-like_sf"/>
</dbReference>
<dbReference type="InterPro" id="IPR012340">
    <property type="entry name" value="NA-bd_OB-fold"/>
</dbReference>
<dbReference type="NCBIfam" id="NF009638">
    <property type="entry name" value="PRK13165.1"/>
    <property type="match status" value="1"/>
</dbReference>
<dbReference type="NCBIfam" id="NF009727">
    <property type="entry name" value="PRK13254.1-1"/>
    <property type="match status" value="1"/>
</dbReference>
<dbReference type="NCBIfam" id="NF009729">
    <property type="entry name" value="PRK13254.1-3"/>
    <property type="match status" value="1"/>
</dbReference>
<dbReference type="NCBIfam" id="NF009731">
    <property type="entry name" value="PRK13254.1-5"/>
    <property type="match status" value="1"/>
</dbReference>
<dbReference type="PANTHER" id="PTHR34128">
    <property type="entry name" value="CYTOCHROME C-TYPE BIOGENESIS PROTEIN CCME HOMOLOG, MITOCHONDRIAL"/>
    <property type="match status" value="1"/>
</dbReference>
<dbReference type="PANTHER" id="PTHR34128:SF2">
    <property type="entry name" value="CYTOCHROME C-TYPE BIOGENESIS PROTEIN CCME HOMOLOG, MITOCHONDRIAL"/>
    <property type="match status" value="1"/>
</dbReference>
<dbReference type="Pfam" id="PF03100">
    <property type="entry name" value="CcmE"/>
    <property type="match status" value="1"/>
</dbReference>
<dbReference type="SUPFAM" id="SSF82093">
    <property type="entry name" value="Heme chaperone CcmE"/>
    <property type="match status" value="1"/>
</dbReference>